<reference key="1">
    <citation type="journal article" date="2002" name="Proc. Natl. Acad. Sci. U.S.A.">
        <title>Extensive mosaic structure revealed by the complete genome sequence of uropathogenic Escherichia coli.</title>
        <authorList>
            <person name="Welch R.A."/>
            <person name="Burland V."/>
            <person name="Plunkett G. III"/>
            <person name="Redford P."/>
            <person name="Roesch P."/>
            <person name="Rasko D."/>
            <person name="Buckles E.L."/>
            <person name="Liou S.-R."/>
            <person name="Boutin A."/>
            <person name="Hackett J."/>
            <person name="Stroud D."/>
            <person name="Mayhew G.F."/>
            <person name="Rose D.J."/>
            <person name="Zhou S."/>
            <person name="Schwartz D.C."/>
            <person name="Perna N.T."/>
            <person name="Mobley H.L.T."/>
            <person name="Donnenberg M.S."/>
            <person name="Blattner F.R."/>
        </authorList>
    </citation>
    <scope>NUCLEOTIDE SEQUENCE [LARGE SCALE GENOMIC DNA]</scope>
    <source>
        <strain>CFT073 / ATCC 700928 / UPEC</strain>
    </source>
</reference>
<name>PNCC_ECOL6</name>
<keyword id="KW-0378">Hydrolase</keyword>
<keyword id="KW-0662">Pyridine nucleotide biosynthesis</keyword>
<keyword id="KW-1185">Reference proteome</keyword>
<accession>P0A6G4</accession>
<accession>P41053</accession>
<organism>
    <name type="scientific">Escherichia coli O6:H1 (strain CFT073 / ATCC 700928 / UPEC)</name>
    <dbReference type="NCBI Taxonomy" id="199310"/>
    <lineage>
        <taxon>Bacteria</taxon>
        <taxon>Pseudomonadati</taxon>
        <taxon>Pseudomonadota</taxon>
        <taxon>Gammaproteobacteria</taxon>
        <taxon>Enterobacterales</taxon>
        <taxon>Enterobacteriaceae</taxon>
        <taxon>Escherichia</taxon>
    </lineage>
</organism>
<feature type="chain" id="PRO_0000156791" description="Nicotinamide-nucleotide amidohydrolase PncC">
    <location>
        <begin position="1"/>
        <end position="165"/>
    </location>
</feature>
<comment type="function">
    <text evidence="1">Has NMN aminohydrolase activity, not active on other substrates.</text>
</comment>
<comment type="catalytic activity">
    <reaction>
        <text>beta-nicotinamide D-ribonucleotide + H2O = nicotinate beta-D-ribonucleotide + NH4(+)</text>
        <dbReference type="Rhea" id="RHEA:12400"/>
        <dbReference type="ChEBI" id="CHEBI:14649"/>
        <dbReference type="ChEBI" id="CHEBI:15377"/>
        <dbReference type="ChEBI" id="CHEBI:28938"/>
        <dbReference type="ChEBI" id="CHEBI:57502"/>
        <dbReference type="EC" id="3.5.1.42"/>
    </reaction>
</comment>
<comment type="subunit">
    <text evidence="1">Homodimer.</text>
</comment>
<comment type="similarity">
    <text evidence="2">Belongs to the CinA family. PncC subfamily.</text>
</comment>
<comment type="sequence caution" evidence="2">
    <conflict type="erroneous initiation">
        <sequence resource="EMBL-CDS" id="AAN81705"/>
    </conflict>
    <text>Extended N-terminus.</text>
</comment>
<protein>
    <recommendedName>
        <fullName>Nicotinamide-nucleotide amidohydrolase PncC</fullName>
        <shortName>NMN amidohydrolase PncC</shortName>
        <ecNumber>3.5.1.42</ecNumber>
    </recommendedName>
    <alternativeName>
        <fullName>NMN deamidase</fullName>
    </alternativeName>
    <alternativeName>
        <fullName>Nicotinamide-nucleotide amidase</fullName>
    </alternativeName>
</protein>
<gene>
    <name type="primary">pncC</name>
    <name type="ordered locus">c3254</name>
</gene>
<sequence>MTDSELMQLSEQVGQALKARGATVTTAESCTGGWVAKVITDIAGSSAWFERGFVTYSNEAKAQMIGVREETLAQHGAVSEPVVVEMAIGALKAARADYAVSISGIAGPDGGSEEKPVGTVWFAFATARGEGITRRECFSGDRDAVRRQATAYALQTLWQQFLQNT</sequence>
<evidence type="ECO:0000250" key="1"/>
<evidence type="ECO:0000305" key="2"/>
<proteinExistence type="inferred from homology"/>
<dbReference type="EC" id="3.5.1.42"/>
<dbReference type="EMBL" id="AE014075">
    <property type="protein sequence ID" value="AAN81705.1"/>
    <property type="status" value="ALT_INIT"/>
    <property type="molecule type" value="Genomic_DNA"/>
</dbReference>
<dbReference type="RefSeq" id="WP_000132231.1">
    <property type="nucleotide sequence ID" value="NZ_CP051263.1"/>
</dbReference>
<dbReference type="SMR" id="P0A6G4"/>
<dbReference type="STRING" id="199310.c3254"/>
<dbReference type="GeneID" id="93779311"/>
<dbReference type="KEGG" id="ecc:c3254"/>
<dbReference type="eggNOG" id="COG1546">
    <property type="taxonomic scope" value="Bacteria"/>
</dbReference>
<dbReference type="HOGENOM" id="CLU_030805_1_1_6"/>
<dbReference type="Proteomes" id="UP000001410">
    <property type="component" value="Chromosome"/>
</dbReference>
<dbReference type="GO" id="GO:0019159">
    <property type="term" value="F:nicotinamide-nucleotide amidase activity"/>
    <property type="evidence" value="ECO:0007669"/>
    <property type="project" value="UniProtKB-EC"/>
</dbReference>
<dbReference type="GO" id="GO:0019363">
    <property type="term" value="P:pyridine nucleotide biosynthetic process"/>
    <property type="evidence" value="ECO:0007669"/>
    <property type="project" value="UniProtKB-KW"/>
</dbReference>
<dbReference type="FunFam" id="3.90.950.20:FF:000001">
    <property type="entry name" value="Competence/damage-inducible domain protein CinA"/>
    <property type="match status" value="1"/>
</dbReference>
<dbReference type="Gene3D" id="3.90.950.20">
    <property type="entry name" value="CinA-like"/>
    <property type="match status" value="1"/>
</dbReference>
<dbReference type="InterPro" id="IPR036653">
    <property type="entry name" value="CinA-like_C"/>
</dbReference>
<dbReference type="InterPro" id="IPR008136">
    <property type="entry name" value="CinA_C"/>
</dbReference>
<dbReference type="NCBIfam" id="TIGR00199">
    <property type="entry name" value="PncC_domain"/>
    <property type="match status" value="1"/>
</dbReference>
<dbReference type="NCBIfam" id="NF002975">
    <property type="entry name" value="PRK03661.1"/>
    <property type="match status" value="1"/>
</dbReference>
<dbReference type="Pfam" id="PF02464">
    <property type="entry name" value="CinA"/>
    <property type="match status" value="1"/>
</dbReference>
<dbReference type="SUPFAM" id="SSF142433">
    <property type="entry name" value="CinA-like"/>
    <property type="match status" value="1"/>
</dbReference>